<keyword id="KW-0028">Amino-acid biosynthesis</keyword>
<keyword id="KW-0055">Arginine biosynthesis</keyword>
<keyword id="KW-0963">Cytoplasm</keyword>
<keyword id="KW-0521">NADP</keyword>
<keyword id="KW-0560">Oxidoreductase</keyword>
<keyword id="KW-1185">Reference proteome</keyword>
<organism>
    <name type="scientific">Prochlorococcus marinus (strain MIT 9301)</name>
    <dbReference type="NCBI Taxonomy" id="167546"/>
    <lineage>
        <taxon>Bacteria</taxon>
        <taxon>Bacillati</taxon>
        <taxon>Cyanobacteriota</taxon>
        <taxon>Cyanophyceae</taxon>
        <taxon>Synechococcales</taxon>
        <taxon>Prochlorococcaceae</taxon>
        <taxon>Prochlorococcus</taxon>
    </lineage>
</organism>
<comment type="function">
    <text evidence="1">Catalyzes the NADPH-dependent reduction of N-acetyl-5-glutamyl phosphate to yield N-acetyl-L-glutamate 5-semialdehyde.</text>
</comment>
<comment type="catalytic activity">
    <reaction evidence="1">
        <text>N-acetyl-L-glutamate 5-semialdehyde + phosphate + NADP(+) = N-acetyl-L-glutamyl 5-phosphate + NADPH + H(+)</text>
        <dbReference type="Rhea" id="RHEA:21588"/>
        <dbReference type="ChEBI" id="CHEBI:15378"/>
        <dbReference type="ChEBI" id="CHEBI:29123"/>
        <dbReference type="ChEBI" id="CHEBI:43474"/>
        <dbReference type="ChEBI" id="CHEBI:57783"/>
        <dbReference type="ChEBI" id="CHEBI:57936"/>
        <dbReference type="ChEBI" id="CHEBI:58349"/>
        <dbReference type="EC" id="1.2.1.38"/>
    </reaction>
</comment>
<comment type="pathway">
    <text evidence="1">Amino-acid biosynthesis; L-arginine biosynthesis; N(2)-acetyl-L-ornithine from L-glutamate: step 3/4.</text>
</comment>
<comment type="subcellular location">
    <subcellularLocation>
        <location evidence="1">Cytoplasm</location>
    </subcellularLocation>
</comment>
<comment type="similarity">
    <text evidence="1">Belongs to the NAGSA dehydrogenase family. Type 1 subfamily.</text>
</comment>
<sequence>MNVAIVGATGYGGIQAVNLLKKNKNYKISFLGGNKTSGLKWNDNFPFIYLDNDPYIEEISVDNISKNADVALLCLPNGLSSTLTRKLLDKGLKVIDLSADYRYKSLDEWKKVYSKEAAIYKRNDDDLCKEAVYGLPEINKEAISKGRLIACPGCYPTSALIPLAPYLSQGIIENEGIVIDSKSGTSGGGREPNQKLLLSECGEGLSAYGLINHRHTSEIEQVASLISGTKIELLFTPHLVPISRGMHSTIYGRLRDPGLTSDDCRILLDNYYRNFKNIKVLPVDTFPSTKWVKNTNQILLSVKVDNRNGRIIILSVIDNLLKGQTGQAIQNLNIMSGFSMDEGLDLTNNFP</sequence>
<reference key="1">
    <citation type="journal article" date="2007" name="PLoS Genet.">
        <title>Patterns and implications of gene gain and loss in the evolution of Prochlorococcus.</title>
        <authorList>
            <person name="Kettler G.C."/>
            <person name="Martiny A.C."/>
            <person name="Huang K."/>
            <person name="Zucker J."/>
            <person name="Coleman M.L."/>
            <person name="Rodrigue S."/>
            <person name="Chen F."/>
            <person name="Lapidus A."/>
            <person name="Ferriera S."/>
            <person name="Johnson J."/>
            <person name="Steglich C."/>
            <person name="Church G.M."/>
            <person name="Richardson P."/>
            <person name="Chisholm S.W."/>
        </authorList>
    </citation>
    <scope>NUCLEOTIDE SEQUENCE [LARGE SCALE GENOMIC DNA]</scope>
    <source>
        <strain>MIT 9301</strain>
    </source>
</reference>
<accession>A3PCW5</accession>
<evidence type="ECO:0000255" key="1">
    <source>
        <dbReference type="HAMAP-Rule" id="MF_00150"/>
    </source>
</evidence>
<feature type="chain" id="PRO_1000011031" description="N-acetyl-gamma-glutamyl-phosphate reductase">
    <location>
        <begin position="1"/>
        <end position="351"/>
    </location>
</feature>
<feature type="active site" evidence="1">
    <location>
        <position position="154"/>
    </location>
</feature>
<protein>
    <recommendedName>
        <fullName evidence="1">N-acetyl-gamma-glutamyl-phosphate reductase</fullName>
        <shortName evidence="1">AGPR</shortName>
        <ecNumber evidence="1">1.2.1.38</ecNumber>
    </recommendedName>
    <alternativeName>
        <fullName evidence="1">N-acetyl-glutamate semialdehyde dehydrogenase</fullName>
        <shortName evidence="1">NAGSA dehydrogenase</shortName>
    </alternativeName>
</protein>
<dbReference type="EC" id="1.2.1.38" evidence="1"/>
<dbReference type="EMBL" id="CP000576">
    <property type="protein sequence ID" value="ABO17590.1"/>
    <property type="molecule type" value="Genomic_DNA"/>
</dbReference>
<dbReference type="RefSeq" id="WP_011862938.1">
    <property type="nucleotide sequence ID" value="NC_009091.1"/>
</dbReference>
<dbReference type="SMR" id="A3PCW5"/>
<dbReference type="STRING" id="167546.P9301_09671"/>
<dbReference type="KEGG" id="pmg:P9301_09671"/>
<dbReference type="eggNOG" id="COG0002">
    <property type="taxonomic scope" value="Bacteria"/>
</dbReference>
<dbReference type="HOGENOM" id="CLU_006384_0_1_3"/>
<dbReference type="OrthoDB" id="9801289at2"/>
<dbReference type="UniPathway" id="UPA00068">
    <property type="reaction ID" value="UER00108"/>
</dbReference>
<dbReference type="Proteomes" id="UP000001430">
    <property type="component" value="Chromosome"/>
</dbReference>
<dbReference type="GO" id="GO:0005737">
    <property type="term" value="C:cytoplasm"/>
    <property type="evidence" value="ECO:0007669"/>
    <property type="project" value="UniProtKB-SubCell"/>
</dbReference>
<dbReference type="GO" id="GO:0003942">
    <property type="term" value="F:N-acetyl-gamma-glutamyl-phosphate reductase activity"/>
    <property type="evidence" value="ECO:0007669"/>
    <property type="project" value="UniProtKB-UniRule"/>
</dbReference>
<dbReference type="GO" id="GO:0051287">
    <property type="term" value="F:NAD binding"/>
    <property type="evidence" value="ECO:0007669"/>
    <property type="project" value="InterPro"/>
</dbReference>
<dbReference type="GO" id="GO:0070401">
    <property type="term" value="F:NADP+ binding"/>
    <property type="evidence" value="ECO:0007669"/>
    <property type="project" value="InterPro"/>
</dbReference>
<dbReference type="GO" id="GO:0006526">
    <property type="term" value="P:L-arginine biosynthetic process"/>
    <property type="evidence" value="ECO:0007669"/>
    <property type="project" value="UniProtKB-UniRule"/>
</dbReference>
<dbReference type="CDD" id="cd23934">
    <property type="entry name" value="AGPR_1_C"/>
    <property type="match status" value="1"/>
</dbReference>
<dbReference type="CDD" id="cd17895">
    <property type="entry name" value="AGPR_1_N"/>
    <property type="match status" value="1"/>
</dbReference>
<dbReference type="Gene3D" id="3.30.360.10">
    <property type="entry name" value="Dihydrodipicolinate Reductase, domain 2"/>
    <property type="match status" value="1"/>
</dbReference>
<dbReference type="Gene3D" id="3.40.50.720">
    <property type="entry name" value="NAD(P)-binding Rossmann-like Domain"/>
    <property type="match status" value="1"/>
</dbReference>
<dbReference type="HAMAP" id="MF_00150">
    <property type="entry name" value="ArgC_type1"/>
    <property type="match status" value="1"/>
</dbReference>
<dbReference type="InterPro" id="IPR023013">
    <property type="entry name" value="AGPR_AS"/>
</dbReference>
<dbReference type="InterPro" id="IPR000706">
    <property type="entry name" value="AGPR_type-1"/>
</dbReference>
<dbReference type="InterPro" id="IPR036291">
    <property type="entry name" value="NAD(P)-bd_dom_sf"/>
</dbReference>
<dbReference type="InterPro" id="IPR050085">
    <property type="entry name" value="NAGSA_dehydrogenase"/>
</dbReference>
<dbReference type="InterPro" id="IPR000534">
    <property type="entry name" value="Semialdehyde_DH_NAD-bd"/>
</dbReference>
<dbReference type="NCBIfam" id="TIGR01850">
    <property type="entry name" value="argC"/>
    <property type="match status" value="1"/>
</dbReference>
<dbReference type="PANTHER" id="PTHR32338:SF10">
    <property type="entry name" value="N-ACETYL-GAMMA-GLUTAMYL-PHOSPHATE REDUCTASE, CHLOROPLASTIC-RELATED"/>
    <property type="match status" value="1"/>
</dbReference>
<dbReference type="PANTHER" id="PTHR32338">
    <property type="entry name" value="N-ACETYL-GAMMA-GLUTAMYL-PHOSPHATE REDUCTASE, CHLOROPLASTIC-RELATED-RELATED"/>
    <property type="match status" value="1"/>
</dbReference>
<dbReference type="Pfam" id="PF01118">
    <property type="entry name" value="Semialdhyde_dh"/>
    <property type="match status" value="1"/>
</dbReference>
<dbReference type="Pfam" id="PF22698">
    <property type="entry name" value="Semialdhyde_dhC_1"/>
    <property type="match status" value="1"/>
</dbReference>
<dbReference type="SMART" id="SM00859">
    <property type="entry name" value="Semialdhyde_dh"/>
    <property type="match status" value="1"/>
</dbReference>
<dbReference type="SUPFAM" id="SSF55347">
    <property type="entry name" value="Glyceraldehyde-3-phosphate dehydrogenase-like, C-terminal domain"/>
    <property type="match status" value="1"/>
</dbReference>
<dbReference type="SUPFAM" id="SSF51735">
    <property type="entry name" value="NAD(P)-binding Rossmann-fold domains"/>
    <property type="match status" value="1"/>
</dbReference>
<dbReference type="PROSITE" id="PS01224">
    <property type="entry name" value="ARGC"/>
    <property type="match status" value="1"/>
</dbReference>
<gene>
    <name evidence="1" type="primary">argC</name>
    <name type="ordered locus">P9301_09671</name>
</gene>
<proteinExistence type="inferred from homology"/>
<name>ARGC_PROM0</name>